<gene>
    <name type="ORF">ORF4</name>
</gene>
<organismHost>
    <name type="scientific">Solanum tuberosum</name>
    <name type="common">Potato</name>
    <dbReference type="NCBI Taxonomy" id="4113"/>
</organismHost>
<dbReference type="EMBL" id="D00530">
    <property type="protein sequence ID" value="BAA00420.1"/>
    <property type="molecule type" value="Genomic_RNA"/>
</dbReference>
<dbReference type="PIR" id="JA0121">
    <property type="entry name" value="GNVQLL"/>
</dbReference>
<dbReference type="RefSeq" id="NP_056750.1">
    <property type="nucleotide sequence ID" value="NC_001747.1"/>
</dbReference>
<dbReference type="KEGG" id="vg:1493892"/>
<dbReference type="Proteomes" id="UP000006723">
    <property type="component" value="Segment"/>
</dbReference>
<dbReference type="GO" id="GO:0044177">
    <property type="term" value="C:host cell Golgi apparatus"/>
    <property type="evidence" value="ECO:0007669"/>
    <property type="project" value="UniProtKB-SubCell"/>
</dbReference>
<dbReference type="GO" id="GO:0044193">
    <property type="term" value="C:host cell mitochondrial outer membrane"/>
    <property type="evidence" value="ECO:0007669"/>
    <property type="project" value="UniProtKB-SubCell"/>
</dbReference>
<dbReference type="GO" id="GO:0044219">
    <property type="term" value="C:host cell plasmodesma"/>
    <property type="evidence" value="ECO:0007669"/>
    <property type="project" value="UniProtKB-SubCell"/>
</dbReference>
<dbReference type="GO" id="GO:0016020">
    <property type="term" value="C:membrane"/>
    <property type="evidence" value="ECO:0007669"/>
    <property type="project" value="UniProtKB-KW"/>
</dbReference>
<dbReference type="GO" id="GO:0046740">
    <property type="term" value="P:transport of virus in host, cell to cell"/>
    <property type="evidence" value="ECO:0007669"/>
    <property type="project" value="UniProtKB-KW"/>
</dbReference>
<dbReference type="InterPro" id="IPR001964">
    <property type="entry name" value="Luteo_VPG"/>
</dbReference>
<dbReference type="Pfam" id="PF01659">
    <property type="entry name" value="Luteo_Vpg"/>
    <property type="match status" value="1"/>
</dbReference>
<dbReference type="PRINTS" id="PR00912">
    <property type="entry name" value="LVIRUSORF5"/>
</dbReference>
<organism>
    <name type="scientific">Potato leafroll virus (strain Potato/Scotland/strain 1/1984)</name>
    <name type="common">PLrV</name>
    <dbReference type="NCBI Taxonomy" id="12046"/>
    <lineage>
        <taxon>Viruses</taxon>
        <taxon>Riboviria</taxon>
        <taxon>Orthornavirae</taxon>
        <taxon>Pisuviricota</taxon>
        <taxon>Pisoniviricetes</taxon>
        <taxon>Sobelivirales</taxon>
        <taxon>Solemoviridae</taxon>
        <taxon>Polerovirus</taxon>
        <taxon>Potato leafroll virus</taxon>
    </lineage>
</organism>
<accession>P17524</accession>
<comment type="function">
    <text evidence="2 4 6">Together with movement protein P3a, facilitates long-distance movement of virions in host (PubMed:30373157). Transports viral genome to neighboring plant cells directly through plasmosdesmata, without any budding (Probable). The movement protein allows efficient cell to cell propagation, by bypassing the host cell wall barrier (Probable). Binds ssRNA (By similarity).</text>
</comment>
<comment type="subunit">
    <text evidence="4">Homodimer (PubMed:30373157). Heterodimer with movement protein P3a (PubMed:30373157).</text>
</comment>
<comment type="subcellular location">
    <subcellularLocation>
        <location evidence="2">Host cell junction</location>
        <location evidence="2">Host plasmodesma</location>
    </subcellularLocation>
    <subcellularLocation>
        <location evidence="4">Host mitochondrion outer membrane</location>
    </subcellularLocation>
    <subcellularLocation>
        <location evidence="1">Host Golgi apparatus</location>
    </subcellularLocation>
    <subcellularLocation>
        <location evidence="4">Host chloroplast envelope</location>
    </subcellularLocation>
    <text evidence="2 4">Localizes to secondary branched plasmodesmata in source organs. Targeted to plasmodesmata in an actin- and endoplasmic reticulum-Golgi-dependent manner (By similarity). P3a directs P17 to the mitochondrial outer membrane while P17 regulates the localization of the P3a-P17 heterodimer to plastids (PubMed:30373157).</text>
</comment>
<comment type="domain">
    <text evidence="2">The N-terminus is involved in homodimerization (By similarity). The C-terminus binds ssRNA (By similarity). The C-terminus is phosphorylated (By similarity).</text>
</comment>
<comment type="PTM">
    <text evidence="2">Expressed as a nonphosphorylated 20kDa form and a phosphorylated 22kDa form (By similarity). Phosphorylated by a host PKC-related kinase (By similarity). Serine phosphorylation is required for plamodesma targeting (By similarity).</text>
</comment>
<comment type="miscellaneous">
    <text evidence="6">Poleroviruses are transmitted by aphids directly into phloem tissue. The virus replicates most efficiently in phloem companion cells and then moves through plasmodesmata between companion cells or into sieve elements for long distance transport.</text>
</comment>
<comment type="similarity">
    <text evidence="6">Belongs to the polerovirus movement protein family.</text>
</comment>
<evidence type="ECO:0000250" key="1">
    <source>
        <dbReference type="UniProtKB" id="P09511"/>
    </source>
</evidence>
<evidence type="ECO:0000250" key="2">
    <source>
        <dbReference type="UniProtKB" id="P10471"/>
    </source>
</evidence>
<evidence type="ECO:0000256" key="3">
    <source>
        <dbReference type="SAM" id="MobiDB-lite"/>
    </source>
</evidence>
<evidence type="ECO:0000269" key="4">
    <source>
    </source>
</evidence>
<evidence type="ECO:0000303" key="5">
    <source>
    </source>
</evidence>
<evidence type="ECO:0000305" key="6"/>
<sequence>MSMVVYNNQECEEGNPFAGALTEFSQWLWSRPLGNPGAEDAEEEAIAAQEELEFPEDEAQARHSCLQRTTSWATPKEVSPSGRVYQTVRHSRMEYSRPTMSIRSQASYFSSSARPLPPPPVPSLMSWTPIAKYHPSSPTSTSSKLRRAAPKLIKRG</sequence>
<name>MVP_PLRV1</name>
<proteinExistence type="evidence at protein level"/>
<feature type="chain" id="PRO_0000222424" description="Movement protein P17">
    <location>
        <begin position="1"/>
        <end position="156"/>
    </location>
</feature>
<feature type="region of interest" description="Homodimerization" evidence="2">
    <location>
        <begin position="38"/>
        <end position="54"/>
    </location>
</feature>
<feature type="region of interest" description="Disordered" evidence="3">
    <location>
        <begin position="55"/>
        <end position="80"/>
    </location>
</feature>
<feature type="region of interest" description="RNA-binding" evidence="2">
    <location>
        <begin position="57"/>
        <end position="156"/>
    </location>
</feature>
<feature type="region of interest" description="Disordered" evidence="3">
    <location>
        <begin position="131"/>
        <end position="156"/>
    </location>
</feature>
<feature type="compositionally biased region" description="Basic residues" evidence="3">
    <location>
        <begin position="144"/>
        <end position="156"/>
    </location>
</feature>
<feature type="modified residue" description="Phosphoserine" evidence="2">
    <location>
        <position position="71"/>
    </location>
</feature>
<feature type="modified residue" description="Phosphoserine" evidence="2">
    <location>
        <position position="79"/>
    </location>
</feature>
<feature type="modified residue" description="Phosphoserine" evidence="2">
    <location>
        <position position="137"/>
    </location>
</feature>
<feature type="modified residue" description="Phosphoserine" evidence="2">
    <location>
        <position position="140"/>
    </location>
</feature>
<reference key="1">
    <citation type="journal article" date="1989" name="J. Gen. Virol.">
        <title>Nucleotide sequence of potato leafroll luteovirus RNA.</title>
        <authorList>
            <person name="Mayo M.A."/>
            <person name="Robinson D.J."/>
            <person name="Jolly C.A."/>
            <person name="Hyman L."/>
        </authorList>
    </citation>
    <scope>NUCLEOTIDE SEQUENCE [GENOMIC RNA]</scope>
</reference>
<reference key="2">
    <citation type="journal article" date="2018" name="Viruses">
        <title>The Interaction Dynamics of Two Potato Leafroll Virus Movement Proteins Affects Their Localization to the Outer Membranes of Mitochondria and Plastids.</title>
        <authorList>
            <person name="DeBlasio S.L."/>
            <person name="Xu Y."/>
            <person name="Johnson R.S."/>
            <person name="Rebelo A.R."/>
            <person name="MacCoss M.J."/>
            <person name="Gray S.M."/>
            <person name="Heck M."/>
        </authorList>
    </citation>
    <scope>FUNCTION</scope>
    <scope>SUBUNIT</scope>
    <scope>INTERACTION WITH MOVEMENT PROTEIN P3A</scope>
    <scope>SUBCELLULAR LOCATION</scope>
</reference>
<keyword id="KW-1031">Host cell junction</keyword>
<keyword id="KW-1040">Host Golgi apparatus</keyword>
<keyword id="KW-1043">Host membrane</keyword>
<keyword id="KW-1045">Host mitochondrion</keyword>
<keyword id="KW-1047">Host mitochondrion outer membrane</keyword>
<keyword id="KW-0472">Membrane</keyword>
<keyword id="KW-0597">Phosphoprotein</keyword>
<keyword id="KW-1185">Reference proteome</keyword>
<keyword id="KW-0813">Transport</keyword>
<keyword id="KW-0916">Viral movement protein</keyword>
<protein>
    <recommendedName>
        <fullName evidence="5">Movement protein P17</fullName>
        <shortName>MP</shortName>
    </recommendedName>
    <alternativeName>
        <fullName>17 kDa protein</fullName>
    </alternativeName>
    <alternativeName>
        <fullName>MP17</fullName>
    </alternativeName>
</protein>